<proteinExistence type="inferred from homology"/>
<reference key="1">
    <citation type="journal article" date="1997" name="Taehan Misaengmul Hakhoe Chi">
        <title>Cloning and nucleotide sequence of the aroA gene from Shigella sonnei KNIH104S.</title>
        <authorList>
            <person name="Park Y.C."/>
            <person name="Shin H.J."/>
            <person name="Hong S.G."/>
            <person name="Hwang S.Y."/>
            <person name="Park G.D."/>
            <person name="Ju Y.R."/>
            <person name="Lee K.J."/>
            <person name="Kim Y.C."/>
        </authorList>
    </citation>
    <scope>NUCLEOTIDE SEQUENCE [GENOMIC DNA]</scope>
    <source>
        <strain>KNIH104S</strain>
    </source>
</reference>
<sequence length="427" mass="46109">MESLTLQPIARVDGTINLPGSKSVSNRALLLAALAHGKTVLTNLLDSDDVRHMLNALTALGVSYTLSADRTRCEIIGNGGPLHAEGALELFLGNAGTAMRPLAAALCLGSNDIVLTGEPRMKERPIGHLVDALRLGGAKITYLEQENYPPLRLQGGFTGGNVDVDGSVSSQFLTALLMNAPLAPEDTVIRIKGDLVSKPYIDITLNLMKTFGVEIENQHYQQFVVKGGQSYQSPGTYLVEGDASSASYFLAAAAIKGGTVKVTGIGRNSMQGDIRFADVLEKMGATICWGDDYISCTRGELNAIDMDMNHIPDAAMTIATAALFAKGTTTLRNIYNWRVKETDRLFAMATELRKVGAEVEEGHDYIRITPPEKLNFAEIATYNDHRMAMCFSLVALSDTPVTILDPKCTAKTFPDYFEQLARISQAA</sequence>
<feature type="chain" id="PRO_0000088289" description="3-phosphoshikimate 1-carboxyvinyltransferase">
    <location>
        <begin position="1"/>
        <end position="427"/>
    </location>
</feature>
<feature type="active site" description="Proton acceptor" evidence="1">
    <location>
        <position position="313"/>
    </location>
</feature>
<feature type="binding site" evidence="1">
    <location>
        <position position="22"/>
    </location>
    <ligand>
        <name>3-phosphoshikimate</name>
        <dbReference type="ChEBI" id="CHEBI:145989"/>
    </ligand>
</feature>
<feature type="binding site" evidence="1">
    <location>
        <position position="22"/>
    </location>
    <ligand>
        <name>phosphoenolpyruvate</name>
        <dbReference type="ChEBI" id="CHEBI:58702"/>
    </ligand>
</feature>
<feature type="binding site" evidence="1">
    <location>
        <position position="23"/>
    </location>
    <ligand>
        <name>3-phosphoshikimate</name>
        <dbReference type="ChEBI" id="CHEBI:145989"/>
    </ligand>
</feature>
<feature type="binding site" evidence="1">
    <location>
        <position position="27"/>
    </location>
    <ligand>
        <name>3-phosphoshikimate</name>
        <dbReference type="ChEBI" id="CHEBI:145989"/>
    </ligand>
</feature>
<feature type="binding site" evidence="1">
    <location>
        <position position="96"/>
    </location>
    <ligand>
        <name>phosphoenolpyruvate</name>
        <dbReference type="ChEBI" id="CHEBI:58702"/>
    </ligand>
</feature>
<feature type="binding site" evidence="1">
    <location>
        <position position="124"/>
    </location>
    <ligand>
        <name>phosphoenolpyruvate</name>
        <dbReference type="ChEBI" id="CHEBI:58702"/>
    </ligand>
</feature>
<feature type="binding site" evidence="1">
    <location>
        <position position="169"/>
    </location>
    <ligand>
        <name>3-phosphoshikimate</name>
        <dbReference type="ChEBI" id="CHEBI:145989"/>
    </ligand>
</feature>
<feature type="binding site" evidence="1">
    <location>
        <position position="170"/>
    </location>
    <ligand>
        <name>3-phosphoshikimate</name>
        <dbReference type="ChEBI" id="CHEBI:145989"/>
    </ligand>
</feature>
<feature type="binding site" evidence="1">
    <location>
        <position position="171"/>
    </location>
    <ligand>
        <name>3-phosphoshikimate</name>
        <dbReference type="ChEBI" id="CHEBI:145989"/>
    </ligand>
</feature>
<feature type="binding site" evidence="1">
    <location>
        <position position="171"/>
    </location>
    <ligand>
        <name>phosphoenolpyruvate</name>
        <dbReference type="ChEBI" id="CHEBI:58702"/>
    </ligand>
</feature>
<feature type="binding site" evidence="1">
    <location>
        <position position="197"/>
    </location>
    <ligand>
        <name>3-phosphoshikimate</name>
        <dbReference type="ChEBI" id="CHEBI:145989"/>
    </ligand>
</feature>
<feature type="binding site" evidence="1">
    <location>
        <position position="313"/>
    </location>
    <ligand>
        <name>3-phosphoshikimate</name>
        <dbReference type="ChEBI" id="CHEBI:145989"/>
    </ligand>
</feature>
<feature type="binding site" evidence="1">
    <location>
        <position position="336"/>
    </location>
    <ligand>
        <name>3-phosphoshikimate</name>
        <dbReference type="ChEBI" id="CHEBI:145989"/>
    </ligand>
</feature>
<feature type="binding site" evidence="1">
    <location>
        <position position="340"/>
    </location>
    <ligand>
        <name>3-phosphoshikimate</name>
        <dbReference type="ChEBI" id="CHEBI:145989"/>
    </ligand>
</feature>
<feature type="binding site" evidence="1">
    <location>
        <position position="344"/>
    </location>
    <ligand>
        <name>phosphoenolpyruvate</name>
        <dbReference type="ChEBI" id="CHEBI:58702"/>
    </ligand>
</feature>
<feature type="binding site" evidence="1">
    <location>
        <position position="386"/>
    </location>
    <ligand>
        <name>phosphoenolpyruvate</name>
        <dbReference type="ChEBI" id="CHEBI:58702"/>
    </ligand>
</feature>
<feature type="binding site" evidence="1">
    <location>
        <position position="411"/>
    </location>
    <ligand>
        <name>phosphoenolpyruvate</name>
        <dbReference type="ChEBI" id="CHEBI:58702"/>
    </ligand>
</feature>
<evidence type="ECO:0000255" key="1">
    <source>
        <dbReference type="HAMAP-Rule" id="MF_00210"/>
    </source>
</evidence>
<evidence type="ECO:0000305" key="2"/>
<protein>
    <recommendedName>
        <fullName evidence="1">3-phosphoshikimate 1-carboxyvinyltransferase</fullName>
        <ecNumber evidence="1">2.5.1.19</ecNumber>
    </recommendedName>
    <alternativeName>
        <fullName evidence="1">5-enolpyruvylshikimate-3-phosphate synthase</fullName>
        <shortName evidence="1">EPSP synthase</shortName>
        <shortName evidence="1">EPSPS</shortName>
    </alternativeName>
</protein>
<dbReference type="EC" id="2.5.1.19" evidence="1"/>
<dbReference type="EMBL" id="AF101225">
    <property type="protein sequence ID" value="AAC72854.1"/>
    <property type="molecule type" value="Genomic_DNA"/>
</dbReference>
<dbReference type="SMR" id="Q9ZFF7"/>
<dbReference type="STRING" id="216599.GCA_000283715_00951"/>
<dbReference type="UniPathway" id="UPA00053">
    <property type="reaction ID" value="UER00089"/>
</dbReference>
<dbReference type="GO" id="GO:0005737">
    <property type="term" value="C:cytoplasm"/>
    <property type="evidence" value="ECO:0007669"/>
    <property type="project" value="UniProtKB-SubCell"/>
</dbReference>
<dbReference type="GO" id="GO:0003866">
    <property type="term" value="F:3-phosphoshikimate 1-carboxyvinyltransferase activity"/>
    <property type="evidence" value="ECO:0007669"/>
    <property type="project" value="UniProtKB-UniRule"/>
</dbReference>
<dbReference type="GO" id="GO:0008652">
    <property type="term" value="P:amino acid biosynthetic process"/>
    <property type="evidence" value="ECO:0007669"/>
    <property type="project" value="UniProtKB-KW"/>
</dbReference>
<dbReference type="GO" id="GO:0009073">
    <property type="term" value="P:aromatic amino acid family biosynthetic process"/>
    <property type="evidence" value="ECO:0007669"/>
    <property type="project" value="UniProtKB-KW"/>
</dbReference>
<dbReference type="GO" id="GO:0009423">
    <property type="term" value="P:chorismate biosynthetic process"/>
    <property type="evidence" value="ECO:0007669"/>
    <property type="project" value="UniProtKB-UniRule"/>
</dbReference>
<dbReference type="CDD" id="cd01554">
    <property type="entry name" value="EPT-like"/>
    <property type="match status" value="1"/>
</dbReference>
<dbReference type="FunFam" id="3.65.10.10:FF:000003">
    <property type="entry name" value="3-phosphoshikimate 1-carboxyvinyltransferase"/>
    <property type="match status" value="1"/>
</dbReference>
<dbReference type="FunFam" id="3.65.10.10:FF:000004">
    <property type="entry name" value="3-phosphoshikimate 1-carboxyvinyltransferase"/>
    <property type="match status" value="1"/>
</dbReference>
<dbReference type="Gene3D" id="3.65.10.10">
    <property type="entry name" value="Enolpyruvate transferase domain"/>
    <property type="match status" value="2"/>
</dbReference>
<dbReference type="HAMAP" id="MF_00210">
    <property type="entry name" value="EPSP_synth"/>
    <property type="match status" value="1"/>
</dbReference>
<dbReference type="InterPro" id="IPR001986">
    <property type="entry name" value="Enolpyruvate_Tfrase_dom"/>
</dbReference>
<dbReference type="InterPro" id="IPR036968">
    <property type="entry name" value="Enolpyruvate_Tfrase_sf"/>
</dbReference>
<dbReference type="InterPro" id="IPR006264">
    <property type="entry name" value="EPSP_synthase"/>
</dbReference>
<dbReference type="InterPro" id="IPR023193">
    <property type="entry name" value="EPSP_synthase_CS"/>
</dbReference>
<dbReference type="InterPro" id="IPR013792">
    <property type="entry name" value="RNA3'P_cycl/enolpyr_Trfase_a/b"/>
</dbReference>
<dbReference type="NCBIfam" id="TIGR01356">
    <property type="entry name" value="aroA"/>
    <property type="match status" value="1"/>
</dbReference>
<dbReference type="PANTHER" id="PTHR21090">
    <property type="entry name" value="AROM/DEHYDROQUINATE SYNTHASE"/>
    <property type="match status" value="1"/>
</dbReference>
<dbReference type="PANTHER" id="PTHR21090:SF5">
    <property type="entry name" value="PENTAFUNCTIONAL AROM POLYPEPTIDE"/>
    <property type="match status" value="1"/>
</dbReference>
<dbReference type="Pfam" id="PF00275">
    <property type="entry name" value="EPSP_synthase"/>
    <property type="match status" value="1"/>
</dbReference>
<dbReference type="PIRSF" id="PIRSF000505">
    <property type="entry name" value="EPSPS"/>
    <property type="match status" value="1"/>
</dbReference>
<dbReference type="SUPFAM" id="SSF55205">
    <property type="entry name" value="EPT/RTPC-like"/>
    <property type="match status" value="1"/>
</dbReference>
<dbReference type="PROSITE" id="PS00104">
    <property type="entry name" value="EPSP_SYNTHASE_1"/>
    <property type="match status" value="1"/>
</dbReference>
<dbReference type="PROSITE" id="PS00885">
    <property type="entry name" value="EPSP_SYNTHASE_2"/>
    <property type="match status" value="1"/>
</dbReference>
<comment type="function">
    <text evidence="1">Catalyzes the transfer of the enolpyruvyl moiety of phosphoenolpyruvate (PEP) to the 5-hydroxyl of shikimate-3-phosphate (S3P) to produce enolpyruvyl shikimate-3-phosphate and inorganic phosphate.</text>
</comment>
<comment type="catalytic activity">
    <reaction evidence="1">
        <text>3-phosphoshikimate + phosphoenolpyruvate = 5-O-(1-carboxyvinyl)-3-phosphoshikimate + phosphate</text>
        <dbReference type="Rhea" id="RHEA:21256"/>
        <dbReference type="ChEBI" id="CHEBI:43474"/>
        <dbReference type="ChEBI" id="CHEBI:57701"/>
        <dbReference type="ChEBI" id="CHEBI:58702"/>
        <dbReference type="ChEBI" id="CHEBI:145989"/>
        <dbReference type="EC" id="2.5.1.19"/>
    </reaction>
    <physiologicalReaction direction="left-to-right" evidence="1">
        <dbReference type="Rhea" id="RHEA:21257"/>
    </physiologicalReaction>
</comment>
<comment type="pathway">
    <text evidence="1">Metabolic intermediate biosynthesis; chorismate biosynthesis; chorismate from D-erythrose 4-phosphate and phosphoenolpyruvate: step 6/7.</text>
</comment>
<comment type="subunit">
    <text evidence="1">Monomer.</text>
</comment>
<comment type="subcellular location">
    <subcellularLocation>
        <location evidence="1">Cytoplasm</location>
    </subcellularLocation>
</comment>
<comment type="similarity">
    <text evidence="1 2">Belongs to the EPSP synthase family.</text>
</comment>
<gene>
    <name evidence="1" type="primary">aroA</name>
</gene>
<accession>Q9ZFF7</accession>
<name>AROA_SHISO</name>
<keyword id="KW-0028">Amino-acid biosynthesis</keyword>
<keyword id="KW-0057">Aromatic amino acid biosynthesis</keyword>
<keyword id="KW-0963">Cytoplasm</keyword>
<keyword id="KW-0808">Transferase</keyword>
<organism>
    <name type="scientific">Shigella sonnei</name>
    <dbReference type="NCBI Taxonomy" id="624"/>
    <lineage>
        <taxon>Bacteria</taxon>
        <taxon>Pseudomonadati</taxon>
        <taxon>Pseudomonadota</taxon>
        <taxon>Gammaproteobacteria</taxon>
        <taxon>Enterobacterales</taxon>
        <taxon>Enterobacteriaceae</taxon>
        <taxon>Shigella</taxon>
    </lineage>
</organism>